<gene>
    <name evidence="1" type="primary">atpH</name>
    <name type="ordered locus">CTN_0845</name>
</gene>
<keyword id="KW-0066">ATP synthesis</keyword>
<keyword id="KW-0997">Cell inner membrane</keyword>
<keyword id="KW-1003">Cell membrane</keyword>
<keyword id="KW-0139">CF(1)</keyword>
<keyword id="KW-0375">Hydrogen ion transport</keyword>
<keyword id="KW-0406">Ion transport</keyword>
<keyword id="KW-0472">Membrane</keyword>
<keyword id="KW-0813">Transport</keyword>
<reference key="1">
    <citation type="submission" date="2007-11" db="EMBL/GenBank/DDBJ databases">
        <title>The genome sequence of the hyperthermophilic bacterium Thermotoga neapolitana.</title>
        <authorList>
            <person name="Lim S.K."/>
            <person name="Kim J.S."/>
            <person name="Cha S.H."/>
            <person name="Park B.C."/>
            <person name="Lee D.S."/>
            <person name="Tae H.S."/>
            <person name="Kim S.-J."/>
            <person name="Kim J.J."/>
            <person name="Park K.J."/>
            <person name="Lee S.Y."/>
        </authorList>
    </citation>
    <scope>NUCLEOTIDE SEQUENCE [LARGE SCALE GENOMIC DNA]</scope>
    <source>
        <strain>ATCC 49049 / DSM 4359 / NBRC 107923 / NS-E</strain>
    </source>
</reference>
<sequence length="183" mass="21597">MKLSAVAGRYARAFLNIAIENEKEDEYLRFLDFVCNVYESNKDLFDNPVVKPEKKVTLIKSVLEEFGEEMDEFQERFLMLLFERKRQKLLRNIHELFEYEKILSEQKVPADLRIAHVPKEEELTLLRKFIRKYALKDPVFKTTVDESLIAGAVVEFEGFRLDTTVQGRLKRLSQETLKRGEMS</sequence>
<organism>
    <name type="scientific">Thermotoga neapolitana (strain ATCC 49049 / DSM 4359 / NBRC 107923 / NS-E)</name>
    <dbReference type="NCBI Taxonomy" id="309803"/>
    <lineage>
        <taxon>Bacteria</taxon>
        <taxon>Thermotogati</taxon>
        <taxon>Thermotogota</taxon>
        <taxon>Thermotogae</taxon>
        <taxon>Thermotogales</taxon>
        <taxon>Thermotogaceae</taxon>
        <taxon>Thermotoga</taxon>
    </lineage>
</organism>
<dbReference type="EMBL" id="CP000916">
    <property type="protein sequence ID" value="ACM23021.1"/>
    <property type="molecule type" value="Genomic_DNA"/>
</dbReference>
<dbReference type="RefSeq" id="WP_015919338.1">
    <property type="nucleotide sequence ID" value="NC_011978.1"/>
</dbReference>
<dbReference type="SMR" id="B9K7T8"/>
<dbReference type="STRING" id="309803.CTN_0845"/>
<dbReference type="KEGG" id="tna:CTN_0845"/>
<dbReference type="eggNOG" id="COG0712">
    <property type="taxonomic scope" value="Bacteria"/>
</dbReference>
<dbReference type="HOGENOM" id="CLU_085114_4_0_0"/>
<dbReference type="Proteomes" id="UP000000445">
    <property type="component" value="Chromosome"/>
</dbReference>
<dbReference type="GO" id="GO:0005886">
    <property type="term" value="C:plasma membrane"/>
    <property type="evidence" value="ECO:0007669"/>
    <property type="project" value="UniProtKB-SubCell"/>
</dbReference>
<dbReference type="GO" id="GO:0045259">
    <property type="term" value="C:proton-transporting ATP synthase complex"/>
    <property type="evidence" value="ECO:0007669"/>
    <property type="project" value="UniProtKB-KW"/>
</dbReference>
<dbReference type="GO" id="GO:0046933">
    <property type="term" value="F:proton-transporting ATP synthase activity, rotational mechanism"/>
    <property type="evidence" value="ECO:0007669"/>
    <property type="project" value="UniProtKB-UniRule"/>
</dbReference>
<dbReference type="Gene3D" id="1.10.520.20">
    <property type="entry name" value="N-terminal domain of the delta subunit of the F1F0-ATP synthase"/>
    <property type="match status" value="1"/>
</dbReference>
<dbReference type="HAMAP" id="MF_01416">
    <property type="entry name" value="ATP_synth_delta_bact"/>
    <property type="match status" value="1"/>
</dbReference>
<dbReference type="InterPro" id="IPR026015">
    <property type="entry name" value="ATP_synth_OSCP/delta_N_sf"/>
</dbReference>
<dbReference type="InterPro" id="IPR000711">
    <property type="entry name" value="ATPase_OSCP/dsu"/>
</dbReference>
<dbReference type="NCBIfam" id="TIGR01145">
    <property type="entry name" value="ATP_synt_delta"/>
    <property type="match status" value="1"/>
</dbReference>
<dbReference type="NCBIfam" id="NF009976">
    <property type="entry name" value="PRK13441.1"/>
    <property type="match status" value="1"/>
</dbReference>
<dbReference type="PANTHER" id="PTHR11910">
    <property type="entry name" value="ATP SYNTHASE DELTA CHAIN"/>
    <property type="match status" value="1"/>
</dbReference>
<dbReference type="Pfam" id="PF00213">
    <property type="entry name" value="OSCP"/>
    <property type="match status" value="1"/>
</dbReference>
<dbReference type="PRINTS" id="PR00125">
    <property type="entry name" value="ATPASEDELTA"/>
</dbReference>
<dbReference type="SUPFAM" id="SSF47928">
    <property type="entry name" value="N-terminal domain of the delta subunit of the F1F0-ATP synthase"/>
    <property type="match status" value="1"/>
</dbReference>
<comment type="function">
    <text evidence="1">F(1)F(0) ATP synthase produces ATP from ADP in the presence of a proton or sodium gradient. F-type ATPases consist of two structural domains, F(1) containing the extramembraneous catalytic core and F(0) containing the membrane proton channel, linked together by a central stalk and a peripheral stalk. During catalysis, ATP synthesis in the catalytic domain of F(1) is coupled via a rotary mechanism of the central stalk subunits to proton translocation.</text>
</comment>
<comment type="function">
    <text evidence="1">This protein is part of the stalk that links CF(0) to CF(1). It either transmits conformational changes from CF(0) to CF(1) or is implicated in proton conduction.</text>
</comment>
<comment type="subunit">
    <text evidence="1">F-type ATPases have 2 components, F(1) - the catalytic core - and F(0) - the membrane proton channel. F(1) has five subunits: alpha(3), beta(3), gamma(1), delta(1), epsilon(1). F(0) has three main subunits: a(1), b(2) and c(10-14). The alpha and beta chains form an alternating ring which encloses part of the gamma chain. F(1) is attached to F(0) by a central stalk formed by the gamma and epsilon chains, while a peripheral stalk is formed by the delta and b chains.</text>
</comment>
<comment type="subcellular location">
    <subcellularLocation>
        <location evidence="1">Cell inner membrane</location>
        <topology evidence="1">Peripheral membrane protein</topology>
    </subcellularLocation>
</comment>
<comment type="similarity">
    <text evidence="1">Belongs to the ATPase delta chain family.</text>
</comment>
<proteinExistence type="inferred from homology"/>
<feature type="chain" id="PRO_0000382162" description="ATP synthase subunit delta">
    <location>
        <begin position="1"/>
        <end position="183"/>
    </location>
</feature>
<protein>
    <recommendedName>
        <fullName evidence="1">ATP synthase subunit delta</fullName>
    </recommendedName>
    <alternativeName>
        <fullName evidence="1">ATP synthase F(1) sector subunit delta</fullName>
    </alternativeName>
    <alternativeName>
        <fullName evidence="1">F-type ATPase subunit delta</fullName>
        <shortName evidence="1">F-ATPase subunit delta</shortName>
    </alternativeName>
</protein>
<name>ATPD_THENN</name>
<accession>B9K7T8</accession>
<evidence type="ECO:0000255" key="1">
    <source>
        <dbReference type="HAMAP-Rule" id="MF_01416"/>
    </source>
</evidence>